<sequence>MTIIQRSTSLNNIINEKLGKIIVASNTLPITVTKFNETPLFGSPLSASRESITSSFGMSEPSRDRESKIQIQINGHPFPTQSALETLKAKDEIEDWLWIGWSHCEVNEDEEPMLNQAIKEFSPHFEHVFLNPRQFENYYKGYCKNGLWLLLHYQMNFIRMQSEWWEEYVGVNQMFAEKIASVWRPSDIIWIHDYHLMLVPQMLRQLLPPEASIGFFFHAPFPSYELFRILPNRKELLKGILSSNLIGFQSFEYVRHFKSSCARLLDLEVHPKGLEIFEDGSTHFTKLQVYPIGVDYNDFAKNLNLPEVSSRVESLRKIFKGKKVVVARDRLDQIEGVPRKLEVFEQLLNDHPEYIGKLVFIQIYEPTVEEGDETDEQKILHKTVNEMVGRINGKFGKLSFNPIEYINKKISYEELSALYKLADIALITPIRDGMNLTSHEYVVCQKDNFGVLILSEFAGAARCLGGSIIVNPFSKKEIMEAIIEALNMSMHDRKLKHQINYNYVLANTSSFWGKRFLCDLNEATQKEIMETSVPRANFQEIEDSYKKAKVRVFFLDYDGTLTPLVRLPSQAMPSKQLIDVLSKLTEDRRNEVYVISGRDRSSLEKWLGHLPIGMSCEHGVFTRQPGENQPWTESPNAEVQWKDTVLSIMQDFEDRTPGSMTETKQVNITWHYRNADPDFGQFQAKELIAQLRSVANKYPLDILSGKKAIEVKPIGINKGEIVKMILQKIDADFILCIGDDKTDEDMFKALYNVPSFTIRVCGDLEESTKARGVVESSSEVLTLLNRLSLS</sequence>
<comment type="function">
    <text evidence="1">Synthesizes trehalose 6-phosphate, the precursor for the production of trehalose, the main carbohydrate storage reserve of the dormant spore. Trehalose accumulates in both prestalk and prespore cells and then is rapidly metabolized during terminal differentiation of stalk cells, while being stored in spores, where it serves as the principal energy and carbon source for germination.</text>
</comment>
<comment type="catalytic activity">
    <reaction>
        <text>D-glucose 6-phosphate + UDP-alpha-D-glucose = alpha,alpha-trehalose 6-phosphate + UDP + H(+)</text>
        <dbReference type="Rhea" id="RHEA:18889"/>
        <dbReference type="ChEBI" id="CHEBI:15378"/>
        <dbReference type="ChEBI" id="CHEBI:58223"/>
        <dbReference type="ChEBI" id="CHEBI:58429"/>
        <dbReference type="ChEBI" id="CHEBI:58885"/>
        <dbReference type="ChEBI" id="CHEBI:61548"/>
        <dbReference type="EC" id="2.4.1.15"/>
    </reaction>
</comment>
<comment type="similarity">
    <text evidence="2">In the N-terminal section; belongs to the glycosyltransferase 20 family.</text>
</comment>
<comment type="similarity">
    <text evidence="2">In the C-terminal section; belongs to the trehalose phosphatase family.</text>
</comment>
<dbReference type="EC" id="2.4.1.15"/>
<dbReference type="EMBL" id="AAFI02000073">
    <property type="protein sequence ID" value="EAL64951.1"/>
    <property type="molecule type" value="Genomic_DNA"/>
</dbReference>
<dbReference type="RefSeq" id="XP_639968.1">
    <property type="nucleotide sequence ID" value="XM_634876.1"/>
</dbReference>
<dbReference type="SMR" id="Q54NU9"/>
<dbReference type="FunCoup" id="Q54NU9">
    <property type="interactions" value="29"/>
</dbReference>
<dbReference type="STRING" id="44689.Q54NU9"/>
<dbReference type="GlyGen" id="Q54NU9">
    <property type="glycosylation" value="1 site"/>
</dbReference>
<dbReference type="PaxDb" id="44689-DDB0231987"/>
<dbReference type="EnsemblProtists" id="EAL64951">
    <property type="protein sequence ID" value="EAL64951"/>
    <property type="gene ID" value="DDB_G0284975"/>
</dbReference>
<dbReference type="GeneID" id="8624879"/>
<dbReference type="KEGG" id="ddi:DDB_G0284975"/>
<dbReference type="dictyBase" id="DDB_G0284975">
    <property type="gene designation" value="tpsB"/>
</dbReference>
<dbReference type="VEuPathDB" id="AmoebaDB:DDB_G0284975"/>
<dbReference type="eggNOG" id="KOG1050">
    <property type="taxonomic scope" value="Eukaryota"/>
</dbReference>
<dbReference type="HOGENOM" id="CLU_002351_3_3_1"/>
<dbReference type="InParanoid" id="Q54NU9"/>
<dbReference type="OMA" id="VHPMPIE"/>
<dbReference type="PhylomeDB" id="Q54NU9"/>
<dbReference type="PRO" id="PR:Q54NU9"/>
<dbReference type="Proteomes" id="UP000002195">
    <property type="component" value="Chromosome 4"/>
</dbReference>
<dbReference type="GO" id="GO:0003825">
    <property type="term" value="F:alpha,alpha-trehalose-phosphate synthase (UDP-forming) activity"/>
    <property type="evidence" value="ECO:0007669"/>
    <property type="project" value="UniProtKB-EC"/>
</dbReference>
<dbReference type="GO" id="GO:0005992">
    <property type="term" value="P:trehalose biosynthetic process"/>
    <property type="evidence" value="ECO:0000318"/>
    <property type="project" value="GO_Central"/>
</dbReference>
<dbReference type="CDD" id="cd03788">
    <property type="entry name" value="GT20_TPS"/>
    <property type="match status" value="1"/>
</dbReference>
<dbReference type="CDD" id="cd01627">
    <property type="entry name" value="HAD_TPP"/>
    <property type="match status" value="1"/>
</dbReference>
<dbReference type="FunFam" id="3.40.50.2000:FF:000010">
    <property type="entry name" value="Alpha,alpha-trehalose-phosphate synthase"/>
    <property type="match status" value="1"/>
</dbReference>
<dbReference type="FunFam" id="3.40.50.1000:FF:000052">
    <property type="entry name" value="Alpha,alpha-trehalose-phosphate synthase [UDP-forming] 6"/>
    <property type="match status" value="1"/>
</dbReference>
<dbReference type="FunFam" id="3.30.70.1020:FF:000002">
    <property type="entry name" value="Trehalose-6-phosphate synthase 2"/>
    <property type="match status" value="1"/>
</dbReference>
<dbReference type="Gene3D" id="3.40.50.2000">
    <property type="entry name" value="Glycogen Phosphorylase B"/>
    <property type="match status" value="2"/>
</dbReference>
<dbReference type="Gene3D" id="3.40.50.1000">
    <property type="entry name" value="HAD superfamily/HAD-like"/>
    <property type="match status" value="1"/>
</dbReference>
<dbReference type="Gene3D" id="3.30.70.1020">
    <property type="entry name" value="Trehalose-6-phosphate phosphatase related protein, domain 2"/>
    <property type="match status" value="1"/>
</dbReference>
<dbReference type="InterPro" id="IPR001830">
    <property type="entry name" value="Glyco_trans_20"/>
</dbReference>
<dbReference type="InterPro" id="IPR036412">
    <property type="entry name" value="HAD-like_sf"/>
</dbReference>
<dbReference type="InterPro" id="IPR006379">
    <property type="entry name" value="HAD-SF_hydro_IIB"/>
</dbReference>
<dbReference type="InterPro" id="IPR023214">
    <property type="entry name" value="HAD_sf"/>
</dbReference>
<dbReference type="InterPro" id="IPR003337">
    <property type="entry name" value="Trehalose_PPase"/>
</dbReference>
<dbReference type="NCBIfam" id="TIGR01484">
    <property type="entry name" value="HAD-SF-IIB"/>
    <property type="match status" value="1"/>
</dbReference>
<dbReference type="NCBIfam" id="NF011071">
    <property type="entry name" value="PRK14501.1"/>
    <property type="match status" value="1"/>
</dbReference>
<dbReference type="NCBIfam" id="TIGR00685">
    <property type="entry name" value="T6PP"/>
    <property type="match status" value="1"/>
</dbReference>
<dbReference type="PANTHER" id="PTHR10788:SF16">
    <property type="entry name" value="ALPHA,ALPHA-TREHALOSE-PHOSPHATE SYNTHASE [UDP-FORMING] B"/>
    <property type="match status" value="1"/>
</dbReference>
<dbReference type="PANTHER" id="PTHR10788">
    <property type="entry name" value="TREHALOSE-6-PHOSPHATE SYNTHASE"/>
    <property type="match status" value="1"/>
</dbReference>
<dbReference type="Pfam" id="PF00982">
    <property type="entry name" value="Glyco_transf_20"/>
    <property type="match status" value="1"/>
</dbReference>
<dbReference type="Pfam" id="PF02358">
    <property type="entry name" value="Trehalose_PPase"/>
    <property type="match status" value="1"/>
</dbReference>
<dbReference type="SUPFAM" id="SSF56784">
    <property type="entry name" value="HAD-like"/>
    <property type="match status" value="1"/>
</dbReference>
<dbReference type="SUPFAM" id="SSF53756">
    <property type="entry name" value="UDP-Glycosyltransferase/glycogen phosphorylase"/>
    <property type="match status" value="1"/>
</dbReference>
<gene>
    <name type="primary">tpsB</name>
    <name type="ORF">DDB_G0284975</name>
</gene>
<name>TPSB_DICDI</name>
<accession>Q54NU9</accession>
<keyword id="KW-0119">Carbohydrate metabolism</keyword>
<keyword id="KW-0328">Glycosyltransferase</keyword>
<keyword id="KW-1185">Reference proteome</keyword>
<keyword id="KW-0808">Transferase</keyword>
<protein>
    <recommendedName>
        <fullName>Alpha,alpha-trehalose-phosphate synthase [UDP-forming] B</fullName>
        <ecNumber>2.4.1.15</ecNumber>
    </recommendedName>
    <alternativeName>
        <fullName>Trehalose-6-phosphate synthase B</fullName>
    </alternativeName>
    <alternativeName>
        <fullName>UDP-glucose-glucosephosphate glucosyltransferase B</fullName>
    </alternativeName>
</protein>
<evidence type="ECO:0000269" key="1">
    <source>
    </source>
</evidence>
<evidence type="ECO:0000305" key="2"/>
<organism>
    <name type="scientific">Dictyostelium discoideum</name>
    <name type="common">Social amoeba</name>
    <dbReference type="NCBI Taxonomy" id="44689"/>
    <lineage>
        <taxon>Eukaryota</taxon>
        <taxon>Amoebozoa</taxon>
        <taxon>Evosea</taxon>
        <taxon>Eumycetozoa</taxon>
        <taxon>Dictyostelia</taxon>
        <taxon>Dictyosteliales</taxon>
        <taxon>Dictyosteliaceae</taxon>
        <taxon>Dictyostelium</taxon>
    </lineage>
</organism>
<feature type="chain" id="PRO_0000328411" description="Alpha,alpha-trehalose-phosphate synthase [UDP-forming] B">
    <location>
        <begin position="1"/>
        <end position="790"/>
    </location>
</feature>
<proteinExistence type="inferred from homology"/>
<reference key="1">
    <citation type="journal article" date="2005" name="Nature">
        <title>The genome of the social amoeba Dictyostelium discoideum.</title>
        <authorList>
            <person name="Eichinger L."/>
            <person name="Pachebat J.A."/>
            <person name="Gloeckner G."/>
            <person name="Rajandream M.A."/>
            <person name="Sucgang R."/>
            <person name="Berriman M."/>
            <person name="Song J."/>
            <person name="Olsen R."/>
            <person name="Szafranski K."/>
            <person name="Xu Q."/>
            <person name="Tunggal B."/>
            <person name="Kummerfeld S."/>
            <person name="Madera M."/>
            <person name="Konfortov B.A."/>
            <person name="Rivero F."/>
            <person name="Bankier A.T."/>
            <person name="Lehmann R."/>
            <person name="Hamlin N."/>
            <person name="Davies R."/>
            <person name="Gaudet P."/>
            <person name="Fey P."/>
            <person name="Pilcher K."/>
            <person name="Chen G."/>
            <person name="Saunders D."/>
            <person name="Sodergren E.J."/>
            <person name="Davis P."/>
            <person name="Kerhornou A."/>
            <person name="Nie X."/>
            <person name="Hall N."/>
            <person name="Anjard C."/>
            <person name="Hemphill L."/>
            <person name="Bason N."/>
            <person name="Farbrother P."/>
            <person name="Desany B."/>
            <person name="Just E."/>
            <person name="Morio T."/>
            <person name="Rost R."/>
            <person name="Churcher C.M."/>
            <person name="Cooper J."/>
            <person name="Haydock S."/>
            <person name="van Driessche N."/>
            <person name="Cronin A."/>
            <person name="Goodhead I."/>
            <person name="Muzny D.M."/>
            <person name="Mourier T."/>
            <person name="Pain A."/>
            <person name="Lu M."/>
            <person name="Harper D."/>
            <person name="Lindsay R."/>
            <person name="Hauser H."/>
            <person name="James K.D."/>
            <person name="Quiles M."/>
            <person name="Madan Babu M."/>
            <person name="Saito T."/>
            <person name="Buchrieser C."/>
            <person name="Wardroper A."/>
            <person name="Felder M."/>
            <person name="Thangavelu M."/>
            <person name="Johnson D."/>
            <person name="Knights A."/>
            <person name="Loulseged H."/>
            <person name="Mungall K.L."/>
            <person name="Oliver K."/>
            <person name="Price C."/>
            <person name="Quail M.A."/>
            <person name="Urushihara H."/>
            <person name="Hernandez J."/>
            <person name="Rabbinowitsch E."/>
            <person name="Steffen D."/>
            <person name="Sanders M."/>
            <person name="Ma J."/>
            <person name="Kohara Y."/>
            <person name="Sharp S."/>
            <person name="Simmonds M.N."/>
            <person name="Spiegler S."/>
            <person name="Tivey A."/>
            <person name="Sugano S."/>
            <person name="White B."/>
            <person name="Walker D."/>
            <person name="Woodward J.R."/>
            <person name="Winckler T."/>
            <person name="Tanaka Y."/>
            <person name="Shaulsky G."/>
            <person name="Schleicher M."/>
            <person name="Weinstock G.M."/>
            <person name="Rosenthal A."/>
            <person name="Cox E.C."/>
            <person name="Chisholm R.L."/>
            <person name="Gibbs R.A."/>
            <person name="Loomis W.F."/>
            <person name="Platzer M."/>
            <person name="Kay R.R."/>
            <person name="Williams J.G."/>
            <person name="Dear P.H."/>
            <person name="Noegel A.A."/>
            <person name="Barrell B.G."/>
            <person name="Kuspa A."/>
        </authorList>
    </citation>
    <scope>NUCLEOTIDE SEQUENCE [LARGE SCALE GENOMIC DNA]</scope>
    <source>
        <strain>AX4</strain>
    </source>
</reference>
<reference key="2">
    <citation type="journal article" date="1979" name="Arch. Biochem. Biophys.">
        <title>Trehalose 6-phosphate synthase from Dictyostelium discoideum: partial purification and characterization of the enzyme from young sorocarps.</title>
        <authorList>
            <person name="Killick K.A."/>
        </authorList>
    </citation>
    <scope>FUNCTION</scope>
</reference>